<reference key="1">
    <citation type="journal article" date="2004" name="Nat. Genet.">
        <title>Comparison of genome degradation in Paratyphi A and Typhi, human-restricted serovars of Salmonella enterica that cause typhoid.</title>
        <authorList>
            <person name="McClelland M."/>
            <person name="Sanderson K.E."/>
            <person name="Clifton S.W."/>
            <person name="Latreille P."/>
            <person name="Porwollik S."/>
            <person name="Sabo A."/>
            <person name="Meyer R."/>
            <person name="Bieri T."/>
            <person name="Ozersky P."/>
            <person name="McLellan M."/>
            <person name="Harkins C.R."/>
            <person name="Wang C."/>
            <person name="Nguyen C."/>
            <person name="Berghoff A."/>
            <person name="Elliott G."/>
            <person name="Kohlberg S."/>
            <person name="Strong C."/>
            <person name="Du F."/>
            <person name="Carter J."/>
            <person name="Kremizki C."/>
            <person name="Layman D."/>
            <person name="Leonard S."/>
            <person name="Sun H."/>
            <person name="Fulton L."/>
            <person name="Nash W."/>
            <person name="Miner T."/>
            <person name="Minx P."/>
            <person name="Delehaunty K."/>
            <person name="Fronick C."/>
            <person name="Magrini V."/>
            <person name="Nhan M."/>
            <person name="Warren W."/>
            <person name="Florea L."/>
            <person name="Spieth J."/>
            <person name="Wilson R.K."/>
        </authorList>
    </citation>
    <scope>NUCLEOTIDE SEQUENCE [LARGE SCALE GENOMIC DNA]</scope>
    <source>
        <strain>ATCC 9150 / SARB42</strain>
    </source>
</reference>
<proteinExistence type="inferred from homology"/>
<feature type="chain" id="PRO_0000252188" description="UPF0386 protein YjhX">
    <location>
        <begin position="1"/>
        <end position="85"/>
    </location>
</feature>
<name>YJHX_SALPA</name>
<sequence length="85" mass="9534">MNLSRQEQRTLHVLAKGGRITHIRDASGRVTAVECYSREGLLLADCTLAVFKKLKTKKLIKSVNGQPYRINTTGLNNVRAQPDNR</sequence>
<evidence type="ECO:0000255" key="1">
    <source>
        <dbReference type="HAMAP-Rule" id="MF_00827"/>
    </source>
</evidence>
<organism>
    <name type="scientific">Salmonella paratyphi A (strain ATCC 9150 / SARB42)</name>
    <dbReference type="NCBI Taxonomy" id="295319"/>
    <lineage>
        <taxon>Bacteria</taxon>
        <taxon>Pseudomonadati</taxon>
        <taxon>Pseudomonadota</taxon>
        <taxon>Gammaproteobacteria</taxon>
        <taxon>Enterobacterales</taxon>
        <taxon>Enterobacteriaceae</taxon>
        <taxon>Salmonella</taxon>
    </lineage>
</organism>
<comment type="similarity">
    <text evidence="1">Belongs to the UPF0386 family.</text>
</comment>
<protein>
    <recommendedName>
        <fullName evidence="1">UPF0386 protein YjhX</fullName>
    </recommendedName>
</protein>
<gene>
    <name evidence="1" type="primary">yjhX</name>
    <name type="ordered locus">SPA4321</name>
</gene>
<accession>Q5PIE1</accession>
<dbReference type="EMBL" id="CP000026">
    <property type="protein sequence ID" value="AAV80048.1"/>
    <property type="molecule type" value="Genomic_DNA"/>
</dbReference>
<dbReference type="RefSeq" id="WP_001054380.1">
    <property type="nucleotide sequence ID" value="NC_006511.1"/>
</dbReference>
<dbReference type="KEGG" id="spt:SPA4321"/>
<dbReference type="HOGENOM" id="CLU_164736_0_0_6"/>
<dbReference type="Proteomes" id="UP000008185">
    <property type="component" value="Chromosome"/>
</dbReference>
<dbReference type="HAMAP" id="MF_00827">
    <property type="entry name" value="UPF0386"/>
    <property type="match status" value="1"/>
</dbReference>
<dbReference type="InterPro" id="IPR018654">
    <property type="entry name" value="YjhX_toxin"/>
</dbReference>
<dbReference type="NCBIfam" id="NF010240">
    <property type="entry name" value="PRK13687.1"/>
    <property type="match status" value="1"/>
</dbReference>
<dbReference type="Pfam" id="PF09857">
    <property type="entry name" value="YjhX_toxin"/>
    <property type="match status" value="1"/>
</dbReference>